<comment type="function">
    <text>TRAP proteins are part of a complex whose function is to bind calcium to the ER membrane and thereby regulate the retention of ER resident proteins. May be involved in the recycling of the translocation apparatus after completion of the translocation process or may function as a membrane-bound chaperone facilitating folding of translocated proteins.</text>
</comment>
<comment type="subunit">
    <text>Heterotetramer of TRAP-alpha, TRAP-beta, TRAP-delta and TRAP-gamma.</text>
</comment>
<comment type="subcellular location">
    <subcellularLocation>
        <location>Endoplasmic reticulum membrane</location>
        <topology>Single-pass type I membrane protein</topology>
    </subcellularLocation>
</comment>
<comment type="domain">
    <text>Shows a remarkable charge distribution with the N-terminus being highly negatively charged, and the cytoplasmic C-terminus positively charged.</text>
</comment>
<comment type="PTM">
    <text evidence="1">Phosphorylated in its cytoplasmic tail.</text>
</comment>
<comment type="miscellaneous">
    <text>Seems to bind calcium.</text>
</comment>
<comment type="similarity">
    <text evidence="4">Belongs to the TRAP-alpha family.</text>
</comment>
<proteinExistence type="evidence at transcript level"/>
<keyword id="KW-0106">Calcium</keyword>
<keyword id="KW-0256">Endoplasmic reticulum</keyword>
<keyword id="KW-0325">Glycoprotein</keyword>
<keyword id="KW-0472">Membrane</keyword>
<keyword id="KW-0597">Phosphoprotein</keyword>
<keyword id="KW-0732">Signal</keyword>
<keyword id="KW-0812">Transmembrane</keyword>
<keyword id="KW-1133">Transmembrane helix</keyword>
<feature type="signal peptide" evidence="2">
    <location>
        <begin position="1"/>
        <end position="28"/>
    </location>
</feature>
<feature type="chain" id="PRO_0000033286" description="Translocon-associated protein subunit alpha">
    <location>
        <begin position="29"/>
        <end position="288"/>
    </location>
</feature>
<feature type="topological domain" description="Lumenal" evidence="2">
    <location>
        <begin position="29"/>
        <end position="208"/>
    </location>
</feature>
<feature type="transmembrane region" description="Helical" evidence="2">
    <location>
        <begin position="209"/>
        <end position="229"/>
    </location>
</feature>
<feature type="topological domain" description="Cytoplasmic" evidence="2">
    <location>
        <begin position="230"/>
        <end position="288"/>
    </location>
</feature>
<feature type="region of interest" description="Disordered" evidence="3">
    <location>
        <begin position="34"/>
        <end position="69"/>
    </location>
</feature>
<feature type="region of interest" description="Disordered" evidence="3">
    <location>
        <begin position="267"/>
        <end position="288"/>
    </location>
</feature>
<feature type="glycosylation site" description="N-linked (GlcNAc...) asparagine" evidence="2">
    <location>
        <position position="137"/>
    </location>
</feature>
<feature type="glycosylation site" description="N-linked (GlcNAc...) asparagine" evidence="2">
    <location>
        <position position="192"/>
    </location>
</feature>
<dbReference type="EMBL" id="Z12831">
    <property type="protein sequence ID" value="CAA78291.1"/>
    <property type="molecule type" value="mRNA"/>
</dbReference>
<dbReference type="PIR" id="I51332">
    <property type="entry name" value="I51332"/>
</dbReference>
<dbReference type="SMR" id="P45433"/>
<dbReference type="GlyCosmos" id="P45433">
    <property type="glycosylation" value="2 sites, No reported glycans"/>
</dbReference>
<dbReference type="Ensembl" id="ENSOMYT00000004747.2">
    <property type="protein sequence ID" value="ENSOMYP00000004235.2"/>
    <property type="gene ID" value="ENSOMYG00000002217.2"/>
</dbReference>
<dbReference type="KEGG" id="omy:100136780"/>
<dbReference type="GeneTree" id="ENSGT00400000022103"/>
<dbReference type="OrthoDB" id="1926781at2759"/>
<dbReference type="Proteomes" id="UP000694395">
    <property type="component" value="Chromosome 7"/>
</dbReference>
<dbReference type="GO" id="GO:0005789">
    <property type="term" value="C:endoplasmic reticulum membrane"/>
    <property type="evidence" value="ECO:0007669"/>
    <property type="project" value="UniProtKB-SubCell"/>
</dbReference>
<dbReference type="InterPro" id="IPR005595">
    <property type="entry name" value="TRAP_alpha"/>
</dbReference>
<dbReference type="PANTHER" id="PTHR12924:SF1">
    <property type="entry name" value="TRANSLOCON-ASSOCIATED PROTEIN SUBUNIT ALPHA"/>
    <property type="match status" value="1"/>
</dbReference>
<dbReference type="PANTHER" id="PTHR12924">
    <property type="entry name" value="TRANSLOCON-ASSOCIATED PROTEIN, ALPHA SUBUNIT"/>
    <property type="match status" value="1"/>
</dbReference>
<dbReference type="Pfam" id="PF03896">
    <property type="entry name" value="TRAP_alpha"/>
    <property type="match status" value="1"/>
</dbReference>
<organism>
    <name type="scientific">Oncorhynchus mykiss</name>
    <name type="common">Rainbow trout</name>
    <name type="synonym">Salmo gairdneri</name>
    <dbReference type="NCBI Taxonomy" id="8022"/>
    <lineage>
        <taxon>Eukaryota</taxon>
        <taxon>Metazoa</taxon>
        <taxon>Chordata</taxon>
        <taxon>Craniata</taxon>
        <taxon>Vertebrata</taxon>
        <taxon>Euteleostomi</taxon>
        <taxon>Actinopterygii</taxon>
        <taxon>Neopterygii</taxon>
        <taxon>Teleostei</taxon>
        <taxon>Protacanthopterygii</taxon>
        <taxon>Salmoniformes</taxon>
        <taxon>Salmonidae</taxon>
        <taxon>Salmoninae</taxon>
        <taxon>Oncorhynchus</taxon>
    </lineage>
</organism>
<name>SSRA_ONCMY</name>
<evidence type="ECO:0000250" key="1"/>
<evidence type="ECO:0000255" key="2"/>
<evidence type="ECO:0000256" key="3">
    <source>
        <dbReference type="SAM" id="MobiDB-lite"/>
    </source>
</evidence>
<evidence type="ECO:0000305" key="4"/>
<gene>
    <name type="primary">ssr1</name>
</gene>
<protein>
    <recommendedName>
        <fullName>Translocon-associated protein subunit alpha</fullName>
        <shortName>TRAP-alpha</shortName>
    </recommendedName>
    <alternativeName>
        <fullName>Signal sequence receptor subunit alpha</fullName>
        <shortName>SSR-alpha</shortName>
    </alternativeName>
</protein>
<sequence>MFNFGSKILVLFLVAFPCGLISFGRVSADSESAEDIFPDSTVDEEEEEEEDEVLVEEDQVPGSETEDDIDEDAAVGDVTSHPDADTTIVFVTGEEFPANEIVKFLVGFTNKGSQDFTVHSLEASFRYPQDFQFYIQNFTALPLSTVVQPQKQASFEYSFIPAQPMAGRPFGLVILLNYQDSEGNGFQTAIYNQTVTIVELEEGLDGETIFMYIFLTGLVVLAVFGMYQVLESRTRKRFPVKVETGTGGMNGVDISWIPQETLNIMSKASASPKASPRKRTKRAVGVDQ</sequence>
<accession>P45433</accession>
<reference key="1">
    <citation type="journal article" date="1994" name="FEBS Lett.">
        <title>The N-terminal region of the alpha-subunit of the TRAP complex has a conserved cluster of negative charges.</title>
        <authorList>
            <person name="Hartmann E."/>
            <person name="Prehn S."/>
        </authorList>
    </citation>
    <scope>NUCLEOTIDE SEQUENCE [MRNA]</scope>
    <source>
        <tissue>Liver</tissue>
    </source>
</reference>